<protein>
    <recommendedName>
        <fullName>General negative regulator of transcription subunit 1</fullName>
    </recommendedName>
</protein>
<comment type="function">
    <text evidence="1">Acts as a component of the CCR4-NOT core complex, which in the nucleus seems to be a general transcription factor, and in the cytoplasm the major mRNA deadenylase involved in mRNA turnover. The NOT protein subcomplex negatively regulates the basal and activated transcription of many genes. Preferentially affects TC-type TATA element-dependent transcription. Could directly or indirectly inhibit component(s) of the general transcription machinery (By similarity).</text>
</comment>
<comment type="subcellular location">
    <subcellularLocation>
        <location evidence="3">Cytoplasm</location>
    </subcellularLocation>
    <subcellularLocation>
        <location evidence="3">Nucleus</location>
    </subcellularLocation>
</comment>
<reference key="1">
    <citation type="journal article" date="2002" name="Nature">
        <title>The genome sequence of Schizosaccharomyces pombe.</title>
        <authorList>
            <person name="Wood V."/>
            <person name="Gwilliam R."/>
            <person name="Rajandream M.A."/>
            <person name="Lyne M.H."/>
            <person name="Lyne R."/>
            <person name="Stewart A."/>
            <person name="Sgouros J.G."/>
            <person name="Peat N."/>
            <person name="Hayles J."/>
            <person name="Baker S.G."/>
            <person name="Basham D."/>
            <person name="Bowman S."/>
            <person name="Brooks K."/>
            <person name="Brown D."/>
            <person name="Brown S."/>
            <person name="Chillingworth T."/>
            <person name="Churcher C.M."/>
            <person name="Collins M."/>
            <person name="Connor R."/>
            <person name="Cronin A."/>
            <person name="Davis P."/>
            <person name="Feltwell T."/>
            <person name="Fraser A."/>
            <person name="Gentles S."/>
            <person name="Goble A."/>
            <person name="Hamlin N."/>
            <person name="Harris D.E."/>
            <person name="Hidalgo J."/>
            <person name="Hodgson G."/>
            <person name="Holroyd S."/>
            <person name="Hornsby T."/>
            <person name="Howarth S."/>
            <person name="Huckle E.J."/>
            <person name="Hunt S."/>
            <person name="Jagels K."/>
            <person name="James K.D."/>
            <person name="Jones L."/>
            <person name="Jones M."/>
            <person name="Leather S."/>
            <person name="McDonald S."/>
            <person name="McLean J."/>
            <person name="Mooney P."/>
            <person name="Moule S."/>
            <person name="Mungall K.L."/>
            <person name="Murphy L.D."/>
            <person name="Niblett D."/>
            <person name="Odell C."/>
            <person name="Oliver K."/>
            <person name="O'Neil S."/>
            <person name="Pearson D."/>
            <person name="Quail M.A."/>
            <person name="Rabbinowitsch E."/>
            <person name="Rutherford K.M."/>
            <person name="Rutter S."/>
            <person name="Saunders D."/>
            <person name="Seeger K."/>
            <person name="Sharp S."/>
            <person name="Skelton J."/>
            <person name="Simmonds M.N."/>
            <person name="Squares R."/>
            <person name="Squares S."/>
            <person name="Stevens K."/>
            <person name="Taylor K."/>
            <person name="Taylor R.G."/>
            <person name="Tivey A."/>
            <person name="Walsh S.V."/>
            <person name="Warren T."/>
            <person name="Whitehead S."/>
            <person name="Woodward J.R."/>
            <person name="Volckaert G."/>
            <person name="Aert R."/>
            <person name="Robben J."/>
            <person name="Grymonprez B."/>
            <person name="Weltjens I."/>
            <person name="Vanstreels E."/>
            <person name="Rieger M."/>
            <person name="Schaefer M."/>
            <person name="Mueller-Auer S."/>
            <person name="Gabel C."/>
            <person name="Fuchs M."/>
            <person name="Duesterhoeft A."/>
            <person name="Fritzc C."/>
            <person name="Holzer E."/>
            <person name="Moestl D."/>
            <person name="Hilbert H."/>
            <person name="Borzym K."/>
            <person name="Langer I."/>
            <person name="Beck A."/>
            <person name="Lehrach H."/>
            <person name="Reinhardt R."/>
            <person name="Pohl T.M."/>
            <person name="Eger P."/>
            <person name="Zimmermann W."/>
            <person name="Wedler H."/>
            <person name="Wambutt R."/>
            <person name="Purnelle B."/>
            <person name="Goffeau A."/>
            <person name="Cadieu E."/>
            <person name="Dreano S."/>
            <person name="Gloux S."/>
            <person name="Lelaure V."/>
            <person name="Mottier S."/>
            <person name="Galibert F."/>
            <person name="Aves S.J."/>
            <person name="Xiang Z."/>
            <person name="Hunt C."/>
            <person name="Moore K."/>
            <person name="Hurst S.M."/>
            <person name="Lucas M."/>
            <person name="Rochet M."/>
            <person name="Gaillardin C."/>
            <person name="Tallada V.A."/>
            <person name="Garzon A."/>
            <person name="Thode G."/>
            <person name="Daga R.R."/>
            <person name="Cruzado L."/>
            <person name="Jimenez J."/>
            <person name="Sanchez M."/>
            <person name="del Rey F."/>
            <person name="Benito J."/>
            <person name="Dominguez A."/>
            <person name="Revuelta J.L."/>
            <person name="Moreno S."/>
            <person name="Armstrong J."/>
            <person name="Forsburg S.L."/>
            <person name="Cerutti L."/>
            <person name="Lowe T."/>
            <person name="McCombie W.R."/>
            <person name="Paulsen I."/>
            <person name="Potashkin J."/>
            <person name="Shpakovski G.V."/>
            <person name="Ussery D."/>
            <person name="Barrell B.G."/>
            <person name="Nurse P."/>
        </authorList>
    </citation>
    <scope>NUCLEOTIDE SEQUENCE [LARGE SCALE GENOMIC DNA]</scope>
    <source>
        <strain>972 / ATCC 24843</strain>
    </source>
</reference>
<reference key="2">
    <citation type="journal article" date="2006" name="Nat. Biotechnol.">
        <title>ORFeome cloning and global analysis of protein localization in the fission yeast Schizosaccharomyces pombe.</title>
        <authorList>
            <person name="Matsuyama A."/>
            <person name="Arai R."/>
            <person name="Yashiroda Y."/>
            <person name="Shirai A."/>
            <person name="Kamata A."/>
            <person name="Sekido S."/>
            <person name="Kobayashi Y."/>
            <person name="Hashimoto A."/>
            <person name="Hamamoto M."/>
            <person name="Hiraoka Y."/>
            <person name="Horinouchi S."/>
            <person name="Yoshida M."/>
        </authorList>
    </citation>
    <scope>SUBCELLULAR LOCATION [LARGE SCALE ANALYSIS]</scope>
</reference>
<reference key="3">
    <citation type="journal article" date="2008" name="J. Proteome Res.">
        <title>Phosphoproteome analysis of fission yeast.</title>
        <authorList>
            <person name="Wilson-Grady J.T."/>
            <person name="Villen J."/>
            <person name="Gygi S.P."/>
        </authorList>
    </citation>
    <scope>PHOSPHORYLATION [LARGE SCALE ANALYSIS] AT SER-1341 AND SER-1568</scope>
    <scope>IDENTIFICATION BY MASS SPECTROMETRY</scope>
</reference>
<proteinExistence type="evidence at protein level"/>
<gene>
    <name type="primary">not1</name>
    <name type="ORF">SPAC20G8.06</name>
</gene>
<name>NOT1_SCHPO</name>
<dbReference type="EMBL" id="CU329670">
    <property type="protein sequence ID" value="CAB08600.1"/>
    <property type="molecule type" value="Genomic_DNA"/>
</dbReference>
<dbReference type="PIR" id="T38128">
    <property type="entry name" value="T38128"/>
</dbReference>
<dbReference type="RefSeq" id="NP_593323.1">
    <property type="nucleotide sequence ID" value="NM_001018754.2"/>
</dbReference>
<dbReference type="SMR" id="P87112"/>
<dbReference type="BioGRID" id="278485">
    <property type="interactions" value="15"/>
</dbReference>
<dbReference type="ComplexPortal" id="CPX-25774">
    <property type="entry name" value="CCR4-NOT mRNA deadenylase complex"/>
</dbReference>
<dbReference type="FunCoup" id="P87112">
    <property type="interactions" value="761"/>
</dbReference>
<dbReference type="STRING" id="284812.P87112"/>
<dbReference type="iPTMnet" id="P87112"/>
<dbReference type="PaxDb" id="4896-SPAC20G8.06.1"/>
<dbReference type="EnsemblFungi" id="SPAC20G8.06.1">
    <property type="protein sequence ID" value="SPAC20G8.06.1:pep"/>
    <property type="gene ID" value="SPAC20G8.06"/>
</dbReference>
<dbReference type="GeneID" id="2542001"/>
<dbReference type="KEGG" id="spo:2542001"/>
<dbReference type="PomBase" id="SPAC20G8.06">
    <property type="gene designation" value="not1"/>
</dbReference>
<dbReference type="VEuPathDB" id="FungiDB:SPAC20G8.06"/>
<dbReference type="eggNOG" id="KOG1831">
    <property type="taxonomic scope" value="Eukaryota"/>
</dbReference>
<dbReference type="HOGENOM" id="CLU_000286_3_1_1"/>
<dbReference type="InParanoid" id="P87112"/>
<dbReference type="OMA" id="IDEYHCY"/>
<dbReference type="PhylomeDB" id="P87112"/>
<dbReference type="PRO" id="PR:P87112"/>
<dbReference type="Proteomes" id="UP000002485">
    <property type="component" value="Chromosome I"/>
</dbReference>
<dbReference type="GO" id="GO:0030014">
    <property type="term" value="C:CCR4-NOT complex"/>
    <property type="evidence" value="ECO:0000314"/>
    <property type="project" value="PomBase"/>
</dbReference>
<dbReference type="GO" id="GO:0030015">
    <property type="term" value="C:CCR4-NOT core complex"/>
    <property type="evidence" value="ECO:0000314"/>
    <property type="project" value="PomBase"/>
</dbReference>
<dbReference type="GO" id="GO:0005829">
    <property type="term" value="C:cytosol"/>
    <property type="evidence" value="ECO:0007005"/>
    <property type="project" value="PomBase"/>
</dbReference>
<dbReference type="GO" id="GO:0005634">
    <property type="term" value="C:nucleus"/>
    <property type="evidence" value="ECO:0007005"/>
    <property type="project" value="PomBase"/>
</dbReference>
<dbReference type="GO" id="GO:0000932">
    <property type="term" value="C:P-body"/>
    <property type="evidence" value="ECO:0000318"/>
    <property type="project" value="GO_Central"/>
</dbReference>
<dbReference type="GO" id="GO:0060090">
    <property type="term" value="F:molecular adaptor activity"/>
    <property type="evidence" value="ECO:0000318"/>
    <property type="project" value="GO_Central"/>
</dbReference>
<dbReference type="GO" id="GO:0017148">
    <property type="term" value="P:negative regulation of translation"/>
    <property type="evidence" value="ECO:0007669"/>
    <property type="project" value="InterPro"/>
</dbReference>
<dbReference type="GO" id="GO:0000288">
    <property type="term" value="P:nuclear-transcribed mRNA catabolic process, deadenylation-dependent decay"/>
    <property type="evidence" value="ECO:0000318"/>
    <property type="project" value="GO_Central"/>
</dbReference>
<dbReference type="GO" id="GO:0000289">
    <property type="term" value="P:nuclear-transcribed mRNA poly(A) tail shortening"/>
    <property type="evidence" value="ECO:0000314"/>
    <property type="project" value="PomBase"/>
</dbReference>
<dbReference type="CDD" id="cd20710">
    <property type="entry name" value="NOT1_connector"/>
    <property type="match status" value="1"/>
</dbReference>
<dbReference type="FunFam" id="1.25.40.180:FF:000012">
    <property type="entry name" value="Ccr4-Not transcription complex subunit"/>
    <property type="match status" value="1"/>
</dbReference>
<dbReference type="Gene3D" id="1.25.40.180">
    <property type="match status" value="1"/>
</dbReference>
<dbReference type="Gene3D" id="1.25.40.790">
    <property type="match status" value="1"/>
</dbReference>
<dbReference type="Gene3D" id="1.25.40.800">
    <property type="match status" value="1"/>
</dbReference>
<dbReference type="Gene3D" id="1.25.40.840">
    <property type="entry name" value="CCR4-NOT transcription complex subunit 1 TTP binding domain"/>
    <property type="match status" value="1"/>
</dbReference>
<dbReference type="InterPro" id="IPR007196">
    <property type="entry name" value="CCR4-Not_Not1_C"/>
</dbReference>
<dbReference type="InterPro" id="IPR055454">
    <property type="entry name" value="CNOT1-like_NOT1_connector"/>
</dbReference>
<dbReference type="InterPro" id="IPR032191">
    <property type="entry name" value="CNOT1_CAF1_bind"/>
</dbReference>
<dbReference type="InterPro" id="IPR024557">
    <property type="entry name" value="CNOT1_dom_4"/>
</dbReference>
<dbReference type="InterPro" id="IPR032194">
    <property type="entry name" value="CNOT1_HEAT"/>
</dbReference>
<dbReference type="InterPro" id="IPR032193">
    <property type="entry name" value="CNOT1_TTP_bind"/>
</dbReference>
<dbReference type="InterPro" id="IPR038535">
    <property type="entry name" value="CNOT1_TTP_bind_sf"/>
</dbReference>
<dbReference type="InterPro" id="IPR040398">
    <property type="entry name" value="Not1"/>
</dbReference>
<dbReference type="PANTHER" id="PTHR13162">
    <property type="entry name" value="CCR4-NOT TRANSCRIPTION COMPLEX"/>
    <property type="match status" value="1"/>
</dbReference>
<dbReference type="PANTHER" id="PTHR13162:SF8">
    <property type="entry name" value="CCR4-NOT TRANSCRIPTION COMPLEX SUBUNIT 1"/>
    <property type="match status" value="1"/>
</dbReference>
<dbReference type="Pfam" id="PF25097">
    <property type="entry name" value="ARM_Cnot1"/>
    <property type="match status" value="1"/>
</dbReference>
<dbReference type="Pfam" id="PF16415">
    <property type="entry name" value="CNOT1_CAF1_bind"/>
    <property type="match status" value="1"/>
</dbReference>
<dbReference type="Pfam" id="PF16418">
    <property type="entry name" value="CNOT1_HEAT"/>
    <property type="match status" value="1"/>
</dbReference>
<dbReference type="Pfam" id="PF16417">
    <property type="entry name" value="CNOT1_TTP_bind"/>
    <property type="match status" value="1"/>
</dbReference>
<dbReference type="Pfam" id="PF12842">
    <property type="entry name" value="DUF3819"/>
    <property type="match status" value="1"/>
</dbReference>
<dbReference type="Pfam" id="PF04054">
    <property type="entry name" value="Not1"/>
    <property type="match status" value="1"/>
</dbReference>
<accession>P87112</accession>
<organism>
    <name type="scientific">Schizosaccharomyces pombe (strain 972 / ATCC 24843)</name>
    <name type="common">Fission yeast</name>
    <dbReference type="NCBI Taxonomy" id="284812"/>
    <lineage>
        <taxon>Eukaryota</taxon>
        <taxon>Fungi</taxon>
        <taxon>Dikarya</taxon>
        <taxon>Ascomycota</taxon>
        <taxon>Taphrinomycotina</taxon>
        <taxon>Schizosaccharomycetes</taxon>
        <taxon>Schizosaccharomycetales</taxon>
        <taxon>Schizosaccharomycetaceae</taxon>
        <taxon>Schizosaccharomyces</taxon>
    </lineage>
</organism>
<evidence type="ECO:0000250" key="1"/>
<evidence type="ECO:0000256" key="2">
    <source>
        <dbReference type="SAM" id="MobiDB-lite"/>
    </source>
</evidence>
<evidence type="ECO:0000269" key="3">
    <source>
    </source>
</evidence>
<evidence type="ECO:0000269" key="4">
    <source>
    </source>
</evidence>
<sequence length="2100" mass="237135">MKSQEQQTPETREKSSSTSESGHPISLDSKTPPPNDSKIESIVKAQILFLLSTLREDQYDTKLEQIRQLINKNAPRVYHHFLRRLIQGNSYRIFGTGKSSDGLATYKLLLDELKSLTKSWVMAKRFSDAISGSDSEVFEDFDIEAFLDHFQFSPLERTNLLIGLTTSVKPTLAKKASALLKNTFQSLLNQLSDPTQQQSIDKNDLDLLREGLFTTDYDRIPLIKVPKFDAIIEKKLANSRPLTALFGPMKASKATLKSMKEAILKKYPPGTATETDVAYLINSLVAIHDYGAWDTVLMGKAIVSSFENLNWEAMLSMFDNPKFMITGTPSLVLFFTIFTNAYKLRQTNFTLDFLWVLWRNPLPQLSIISHIILSPTSMFDIREFNVNPVVSVDSLKDYSEELVNYAKIYEKSNLNCIELVQILLRLLSEVVTYETSLFLNFLDEKVSAELLLLGTLQLPLAWNPVQESLAFQWCSDFFSNFKEHKFVFVRIERTNPQFLFAFLRSLWLKDSSSVNQVVEFIIENDFTSHIGNIQPNRFALEIAALAAARKALSFQDWLDKKMLEFEDADGLNVFLVEVLDFLMSRAALQKNESEQKEESVVLSIDTVNVLLTTLMDNVSISEEVSEHIKDVQILCLQVYPRLFSLGHDRDSIVIATNTTNSFSPDVESEVESYFQALYERRISIGKIVLTLQNFKKSENPRDLDLFACLQHSLFDEYRFFPDYPLEALALTAVLFGSLIQFELLSFVPLGVALRYVYQALLMPTDSKMFRFGMQALVQFQEKLPKYINYCNLILGIPSLQLVRPDIYDSIREMIASNENTEVEKDKLDSFSALANPASPKAPEYTFVSIHVPPLNVPNAEGEIEESVCDNILFAINNLSQLNFNEKLKDVKDNLTPAYLPWFSHYIVTQRVSREANFLSLYGKFLEELKSSDLYKIVFRDTLQAILDIMNNNAETLSPSEKTNLKNLGSWLGSITLLRNKPITTLQVSFKDLLLEGIDSGRIDRVLPFVCKVLEKASSSVIFKPPNPWLMGILKLLVELYQFADFRLNLKFEIELLLNNLNVKMDNIEPSEMYRNHLVQKADLEKELPEDVLNAEFPDGTDVITQYIVAASSQITVTDAVAQVFGKPKPAIKNITQLIIQQSVLEIISAVVRRSVGIAAITTKSLLQKDFAAESNPSRLLLAARQMAKTLAGNLAMVTCREPLQMLMINNFRTIALQDVENVHAAVAQAIDELVSQNLFVASSVIESVASETAIAEIDAEIEHMIVERVRHRKTTPNLPFVDPAGAANLHLNLPSVLKLSSELTPQQFQLYENFDRLSLSTIMSNNSFTSLNGLRTDSADSTDALNSNLNNTVENEANQTALNYARNLLIIIGQLFQLAAQMPYTSMQEVPADHELHELVNQFLTGVASINHPIADHVFLLCAQECCRILLTDSKSPFILEVFSAILEYICQASTKTAINVSLYWNFSNDLEKLNLPIILSLIRFGILTSGEVDYHVARGVRSEQGSGPVTDFAIELLRTAVGGENPMALPGNFVNSITSLYEISESFSGETKQAYEQLVETMNKSVSPASEILSDLDNKQQLNDQIIIVFVSWVHLLRNSATNDETKAAFVYQLHKQGILSEPELCIQFFRCNLEAVLVAFLEAASVNAPDYFNVDAYASLLVNVVKYTEGSTEGTVSSKSVLFRKIIALIIGVFAELHNSMAEFVHQKTFFRLFSSILSELDDAKDVLESCFVDIYSVILECFLAIQPRSFPAFTFAWLSLISHSYLLPKVLLVNNDKINDLFSEILMSFLKFLDLKDDIDKAQFKLLYNGFLRIILVLLHDFPGFLATHCYQLIPYIPLECVQLRNMVLSAFPSDLHLPDPFAQGLKVGRLPEVTRAPLISNSVSASLEKFASALDLEACFSSSKPAEVAKLLLEVYSSQDTPTKLNEWANYFMLCLIRHATRDSPAKQAPQFQSKSPECVIISTMNRSCDSKCRYFLLTAIANQLRYPSSHTYYASCCFLYLFKSSSNNPQELLIKEQMTTVLLERIICNRPHPWGLLITFTELLKNEDYNFWKHPYIKRNDEICRLFDSLHEHVMAPSSANNVSTEEATELMGQV</sequence>
<feature type="chain" id="PRO_0000318140" description="General negative regulator of transcription subunit 1">
    <location>
        <begin position="1"/>
        <end position="2100"/>
    </location>
</feature>
<feature type="region of interest" description="Disordered" evidence="2">
    <location>
        <begin position="1"/>
        <end position="36"/>
    </location>
</feature>
<feature type="modified residue" description="Phosphoserine" evidence="4">
    <location>
        <position position="1341"/>
    </location>
</feature>
<feature type="modified residue" description="Phosphoserine" evidence="4">
    <location>
        <position position="1568"/>
    </location>
</feature>
<keyword id="KW-0010">Activator</keyword>
<keyword id="KW-0963">Cytoplasm</keyword>
<keyword id="KW-0539">Nucleus</keyword>
<keyword id="KW-0597">Phosphoprotein</keyword>
<keyword id="KW-1185">Reference proteome</keyword>
<keyword id="KW-0678">Repressor</keyword>
<keyword id="KW-0804">Transcription</keyword>
<keyword id="KW-0805">Transcription regulation</keyword>